<gene>
    <name type="primary">Actg1</name>
    <name type="synonym">Actg</name>
</gene>
<feature type="chain" id="PRO_0000367101" description="Actin, cytoplasmic 2">
    <location>
        <begin position="1"/>
        <end position="375"/>
    </location>
</feature>
<feature type="initiator methionine" description="Removed; alternate" evidence="3">
    <location>
        <position position="1"/>
    </location>
</feature>
<feature type="chain" id="PRO_0000000833" description="Actin, cytoplasmic 2, N-terminally processed">
    <location>
        <begin position="2"/>
        <end position="375"/>
    </location>
</feature>
<feature type="modified residue" description="N-acetylmethionine" evidence="1">
    <location>
        <position position="1"/>
    </location>
</feature>
<feature type="modified residue" description="N-acetylglutamate; in Actin, cytoplasmic 2, N-terminally processed" evidence="3">
    <location>
        <position position="2"/>
    </location>
</feature>
<feature type="modified residue" description="Methionine (R)-sulfoxide" evidence="4">
    <location>
        <position position="44"/>
    </location>
</feature>
<feature type="modified residue" description="Methionine (R)-sulfoxide" evidence="4">
    <location>
        <position position="47"/>
    </location>
</feature>
<feature type="modified residue" description="Tele-methylhistidine" evidence="3">
    <location>
        <position position="73"/>
    </location>
</feature>
<feature type="modified residue" description="N6-methyllysine" evidence="1">
    <location>
        <position position="84"/>
    </location>
</feature>
<feature type="mutagenesis site" description="No effect on interaction with XIRP2." evidence="5">
    <original>G</original>
    <variation>R</variation>
    <location>
        <position position="13"/>
    </location>
</feature>
<keyword id="KW-0007">Acetylation</keyword>
<keyword id="KW-0067">ATP-binding</keyword>
<keyword id="KW-0963">Cytoplasm</keyword>
<keyword id="KW-0206">Cytoskeleton</keyword>
<keyword id="KW-0903">Direct protein sequencing</keyword>
<keyword id="KW-0378">Hydrolase</keyword>
<keyword id="KW-0488">Methylation</keyword>
<keyword id="KW-0547">Nucleotide-binding</keyword>
<keyword id="KW-0558">Oxidation</keyword>
<keyword id="KW-1185">Reference proteome</keyword>
<comment type="function">
    <text evidence="1 5">Actins are highly conserved proteins that are involved in various types of cell motility and are ubiquitously expressed in all eukaryotic cells. Plays a role in the repair of noise-induced stereocilia gaps following recruitment by XIRP2 isoform 3, thereby maintains hearing sensitivity following loud noise damage (PubMed:37294664).</text>
</comment>
<comment type="catalytic activity">
    <reaction evidence="2">
        <text>ATP + H2O = ADP + phosphate + H(+)</text>
        <dbReference type="Rhea" id="RHEA:13065"/>
        <dbReference type="ChEBI" id="CHEBI:15377"/>
        <dbReference type="ChEBI" id="CHEBI:15378"/>
        <dbReference type="ChEBI" id="CHEBI:30616"/>
        <dbReference type="ChEBI" id="CHEBI:43474"/>
        <dbReference type="ChEBI" id="CHEBI:456216"/>
    </reaction>
</comment>
<comment type="subunit">
    <text evidence="1 5">Polymerization of globular actin (G-actin) leads to a structural filament (F-actin) in the form of a two-stranded helix. Each actin can bind to 4 others. Interacts with TWF1, CAPZB, cofilin and profilin. Interacts with isoform 3 of XIRP2 (via C-terminus); the interaction recruits ACTG1 to areas of repair in stereocilia gaps following auditory damage (PubMed:37294664).</text>
</comment>
<comment type="interaction">
    <interactant intactId="EBI-351301">
        <id>P63260</id>
    </interactant>
    <interactant intactId="EBI-1633915">
        <id>Q08460</id>
        <label>Kcnma1</label>
    </interactant>
    <organismsDiffer>false</organismsDiffer>
    <experiments>4</experiments>
</comment>
<comment type="subcellular location">
    <subcellularLocation>
        <location evidence="1">Cytoplasm</location>
        <location evidence="1">Cytoskeleton</location>
    </subcellularLocation>
</comment>
<comment type="tissue specificity">
    <text evidence="5">Weakly expressed in stereocilia of inner hair and utricle cells (at protein level).</text>
</comment>
<comment type="induction">
    <text evidence="5">Induced by loud noise at gaps in inner hair cells and utricle stereocilia.</text>
</comment>
<comment type="PTM">
    <text evidence="4">Oxidation of Met-44 and Met-47 by MICALs (MICAL1, MICAL2 or MICAL3) to form methionine sulfoxide promotes actin filament depolymerization. MICAL1 and MICAL2 produce the (R)-S-oxide form (PubMed:23911929). The (R)-S-oxide form is reverted by MSRB1 and MSRB2, which promote actin repolymerization (PubMed:23911929).</text>
</comment>
<comment type="PTM">
    <text evidence="1">Monomethylation at Lys-84 (K84me1) regulates actin-myosin interaction and actomyosin-dependent processes. Demethylation by ALKBH4 is required for maintaining actomyosin dynamics supporting normal cleavage furrow ingression during cytokinesis and cell migration.</text>
</comment>
<comment type="PTM">
    <molecule>Actin, cytoplasmic 2, N-terminally processed</molecule>
    <text evidence="1">N-terminal acetylation by NAA80 affects actin filament depolymerization and elongation, including elongation driven by formins. In contrast, filament nucleation by the Arp2/3 complex is not affected.</text>
</comment>
<comment type="PTM">
    <molecule>Actin, cytoplasmic 2</molecule>
    <text evidence="1">N-terminal cleavage of acetylated methionine of immature cytoplasmic actin by ACTMAP.</text>
</comment>
<comment type="PTM">
    <text evidence="1">Methylated at His-73 by SETD3.</text>
</comment>
<comment type="miscellaneous">
    <text>In vertebrates 3 main groups of actin isoforms, alpha, beta and gamma have been identified. The alpha actins are found in muscle tissues and are a major constituent of the contractile apparatus. The beta and gamma actins coexist in most cell types as components of the cytoskeleton and as mediators of internal cell motility.</text>
</comment>
<comment type="similarity">
    <text evidence="6">Belongs to the actin family.</text>
</comment>
<organism>
    <name type="scientific">Mus musculus</name>
    <name type="common">Mouse</name>
    <dbReference type="NCBI Taxonomy" id="10090"/>
    <lineage>
        <taxon>Eukaryota</taxon>
        <taxon>Metazoa</taxon>
        <taxon>Chordata</taxon>
        <taxon>Craniata</taxon>
        <taxon>Vertebrata</taxon>
        <taxon>Euteleostomi</taxon>
        <taxon>Mammalia</taxon>
        <taxon>Eutheria</taxon>
        <taxon>Euarchontoglires</taxon>
        <taxon>Glires</taxon>
        <taxon>Rodentia</taxon>
        <taxon>Myomorpha</taxon>
        <taxon>Muroidea</taxon>
        <taxon>Muridae</taxon>
        <taxon>Murinae</taxon>
        <taxon>Mus</taxon>
        <taxon>Mus</taxon>
    </lineage>
</organism>
<accession>P63260</accession>
<accession>P02571</accession>
<accession>P14104</accession>
<accession>P99022</accession>
<protein>
    <recommendedName>
        <fullName>Actin, cytoplasmic 2</fullName>
        <ecNumber evidence="2">3.6.4.-</ecNumber>
    </recommendedName>
    <alternativeName>
        <fullName>Gamma-actin</fullName>
    </alternativeName>
    <component>
        <recommendedName>
            <fullName>Actin, cytoplasmic 2, N-terminally processed</fullName>
        </recommendedName>
    </component>
</protein>
<sequence>MEEEIAALVIDNGSGMCKAGFAGDDAPRAVFPSIVGRPRHQGVMVGMGQKDSYVGDEAQSKRGILTLKYPIEHGIVTNWDDMEKIWHHTFYNELRVAPEEHPVLLTEAPLNPKANREKMTQIMFETFNTPAMYVAIQAVLSLYASGRTTGIVMDSGDGVTHTVPIYEGYALPHAILRLDLAGRDLTDYLMKILTERGYSFTTTAEREIVRDIKEKLCYVALDFEQEMATAASSSSLEKSYELPDGQVITIGNERFRCPEALFQPSFLGMESCGIHETTFNSIMKCDVDIRKDLYANTVLSGGTTMYPGIADRMQKEITALAPSTMKIKIIAPPERKYSVWIGGSILASLSTFQQMWISKQEYDESGPSIVHRKCF</sequence>
<proteinExistence type="evidence at protein level"/>
<name>ACTG_MOUSE</name>
<reference key="1">
    <citation type="journal article" date="1978" name="Eur. J. Biochem.">
        <title>Actin amino-acid sequences. Comparison of actins from calf thymus, bovine brain, and SV40-transformed mouse 3T3 cells with rabbit skeletal muscle actin.</title>
        <authorList>
            <person name="Vandekerckhove J."/>
            <person name="Weber K."/>
        </authorList>
    </citation>
    <scope>PROTEIN SEQUENCE OF 2-375</scope>
    <scope>CLEAVAGE OF INITIATOR METHIONINE</scope>
    <scope>ACETYLATION AT GLU-2</scope>
    <scope>METHYLATION AT HIS-73</scope>
</reference>
<reference key="2">
    <citation type="journal article" date="1988" name="Mol. Cell. Biol.">
        <title>Isolation of cDNA clones for mouse cytoskeletal gamma-actin and differential expression of cytoskeletal actin mRNAs in mouse cells.</title>
        <authorList>
            <person name="Tokunaga K."/>
            <person name="Takeda K."/>
            <person name="Kamiyama K."/>
            <person name="Kageyama H."/>
            <person name="Takenaga K."/>
            <person name="Sakiyama S."/>
        </authorList>
    </citation>
    <scope>NUCLEOTIDE SEQUENCE [MRNA]</scope>
</reference>
<reference key="3">
    <citation type="journal article" date="2005" name="Science">
        <title>The transcriptional landscape of the mammalian genome.</title>
        <authorList>
            <person name="Carninci P."/>
            <person name="Kasukawa T."/>
            <person name="Katayama S."/>
            <person name="Gough J."/>
            <person name="Frith M.C."/>
            <person name="Maeda N."/>
            <person name="Oyama R."/>
            <person name="Ravasi T."/>
            <person name="Lenhard B."/>
            <person name="Wells C."/>
            <person name="Kodzius R."/>
            <person name="Shimokawa K."/>
            <person name="Bajic V.B."/>
            <person name="Brenner S.E."/>
            <person name="Batalov S."/>
            <person name="Forrest A.R."/>
            <person name="Zavolan M."/>
            <person name="Davis M.J."/>
            <person name="Wilming L.G."/>
            <person name="Aidinis V."/>
            <person name="Allen J.E."/>
            <person name="Ambesi-Impiombato A."/>
            <person name="Apweiler R."/>
            <person name="Aturaliya R.N."/>
            <person name="Bailey T.L."/>
            <person name="Bansal M."/>
            <person name="Baxter L."/>
            <person name="Beisel K.W."/>
            <person name="Bersano T."/>
            <person name="Bono H."/>
            <person name="Chalk A.M."/>
            <person name="Chiu K.P."/>
            <person name="Choudhary V."/>
            <person name="Christoffels A."/>
            <person name="Clutterbuck D.R."/>
            <person name="Crowe M.L."/>
            <person name="Dalla E."/>
            <person name="Dalrymple B.P."/>
            <person name="de Bono B."/>
            <person name="Della Gatta G."/>
            <person name="di Bernardo D."/>
            <person name="Down T."/>
            <person name="Engstrom P."/>
            <person name="Fagiolini M."/>
            <person name="Faulkner G."/>
            <person name="Fletcher C.F."/>
            <person name="Fukushima T."/>
            <person name="Furuno M."/>
            <person name="Futaki S."/>
            <person name="Gariboldi M."/>
            <person name="Georgii-Hemming P."/>
            <person name="Gingeras T.R."/>
            <person name="Gojobori T."/>
            <person name="Green R.E."/>
            <person name="Gustincich S."/>
            <person name="Harbers M."/>
            <person name="Hayashi Y."/>
            <person name="Hensch T.K."/>
            <person name="Hirokawa N."/>
            <person name="Hill D."/>
            <person name="Huminiecki L."/>
            <person name="Iacono M."/>
            <person name="Ikeo K."/>
            <person name="Iwama A."/>
            <person name="Ishikawa T."/>
            <person name="Jakt M."/>
            <person name="Kanapin A."/>
            <person name="Katoh M."/>
            <person name="Kawasawa Y."/>
            <person name="Kelso J."/>
            <person name="Kitamura H."/>
            <person name="Kitano H."/>
            <person name="Kollias G."/>
            <person name="Krishnan S.P."/>
            <person name="Kruger A."/>
            <person name="Kummerfeld S.K."/>
            <person name="Kurochkin I.V."/>
            <person name="Lareau L.F."/>
            <person name="Lazarevic D."/>
            <person name="Lipovich L."/>
            <person name="Liu J."/>
            <person name="Liuni S."/>
            <person name="McWilliam S."/>
            <person name="Madan Babu M."/>
            <person name="Madera M."/>
            <person name="Marchionni L."/>
            <person name="Matsuda H."/>
            <person name="Matsuzawa S."/>
            <person name="Miki H."/>
            <person name="Mignone F."/>
            <person name="Miyake S."/>
            <person name="Morris K."/>
            <person name="Mottagui-Tabar S."/>
            <person name="Mulder N."/>
            <person name="Nakano N."/>
            <person name="Nakauchi H."/>
            <person name="Ng P."/>
            <person name="Nilsson R."/>
            <person name="Nishiguchi S."/>
            <person name="Nishikawa S."/>
            <person name="Nori F."/>
            <person name="Ohara O."/>
            <person name="Okazaki Y."/>
            <person name="Orlando V."/>
            <person name="Pang K.C."/>
            <person name="Pavan W.J."/>
            <person name="Pavesi G."/>
            <person name="Pesole G."/>
            <person name="Petrovsky N."/>
            <person name="Piazza S."/>
            <person name="Reed J."/>
            <person name="Reid J.F."/>
            <person name="Ring B.Z."/>
            <person name="Ringwald M."/>
            <person name="Rost B."/>
            <person name="Ruan Y."/>
            <person name="Salzberg S.L."/>
            <person name="Sandelin A."/>
            <person name="Schneider C."/>
            <person name="Schoenbach C."/>
            <person name="Sekiguchi K."/>
            <person name="Semple C.A."/>
            <person name="Seno S."/>
            <person name="Sessa L."/>
            <person name="Sheng Y."/>
            <person name="Shibata Y."/>
            <person name="Shimada H."/>
            <person name="Shimada K."/>
            <person name="Silva D."/>
            <person name="Sinclair B."/>
            <person name="Sperling S."/>
            <person name="Stupka E."/>
            <person name="Sugiura K."/>
            <person name="Sultana R."/>
            <person name="Takenaka Y."/>
            <person name="Taki K."/>
            <person name="Tammoja K."/>
            <person name="Tan S.L."/>
            <person name="Tang S."/>
            <person name="Taylor M.S."/>
            <person name="Tegner J."/>
            <person name="Teichmann S.A."/>
            <person name="Ueda H.R."/>
            <person name="van Nimwegen E."/>
            <person name="Verardo R."/>
            <person name="Wei C.L."/>
            <person name="Yagi K."/>
            <person name="Yamanishi H."/>
            <person name="Zabarovsky E."/>
            <person name="Zhu S."/>
            <person name="Zimmer A."/>
            <person name="Hide W."/>
            <person name="Bult C."/>
            <person name="Grimmond S.M."/>
            <person name="Teasdale R.D."/>
            <person name="Liu E.T."/>
            <person name="Brusic V."/>
            <person name="Quackenbush J."/>
            <person name="Wahlestedt C."/>
            <person name="Mattick J.S."/>
            <person name="Hume D.A."/>
            <person name="Kai C."/>
            <person name="Sasaki D."/>
            <person name="Tomaru Y."/>
            <person name="Fukuda S."/>
            <person name="Kanamori-Katayama M."/>
            <person name="Suzuki M."/>
            <person name="Aoki J."/>
            <person name="Arakawa T."/>
            <person name="Iida J."/>
            <person name="Imamura K."/>
            <person name="Itoh M."/>
            <person name="Kato T."/>
            <person name="Kawaji H."/>
            <person name="Kawagashira N."/>
            <person name="Kawashima T."/>
            <person name="Kojima M."/>
            <person name="Kondo S."/>
            <person name="Konno H."/>
            <person name="Nakano K."/>
            <person name="Ninomiya N."/>
            <person name="Nishio T."/>
            <person name="Okada M."/>
            <person name="Plessy C."/>
            <person name="Shibata K."/>
            <person name="Shiraki T."/>
            <person name="Suzuki S."/>
            <person name="Tagami M."/>
            <person name="Waki K."/>
            <person name="Watahiki A."/>
            <person name="Okamura-Oho Y."/>
            <person name="Suzuki H."/>
            <person name="Kawai J."/>
            <person name="Hayashizaki Y."/>
        </authorList>
    </citation>
    <scope>NUCLEOTIDE SEQUENCE [LARGE SCALE MRNA]</scope>
    <source>
        <strain>C57BL/6J</strain>
        <strain>NOD</strain>
        <tissue>Thymus</tissue>
    </source>
</reference>
<reference key="4">
    <citation type="journal article" date="2004" name="Genome Res.">
        <title>The status, quality, and expansion of the NIH full-length cDNA project: the Mammalian Gene Collection (MGC).</title>
        <authorList>
            <consortium name="The MGC Project Team"/>
        </authorList>
    </citation>
    <scope>NUCLEOTIDE SEQUENCE [LARGE SCALE MRNA]</scope>
    <source>
        <strain>FVB/N</strain>
        <strain>NMRI</strain>
        <tissue>Colon</tissue>
        <tissue>Mammary tumor</tissue>
    </source>
</reference>
<reference key="5">
    <citation type="journal article" date="1988" name="J. Mol. Biol.">
        <title>Mouse cytoskeletal gamma-actin: analysis and implications of the structure of cloned cDNA and processed pseudogenes.</title>
        <authorList>
            <person name="Peter B."/>
            <person name="Man Y.M."/>
            <person name="Begg C.E."/>
            <person name="Gall I."/>
            <person name="Leader D.P."/>
        </authorList>
    </citation>
    <scope>NUCLEOTIDE SEQUENCE [MRNA] OF 8-375</scope>
</reference>
<reference key="6">
    <citation type="submission" date="2007-07" db="UniProtKB">
        <authorList>
            <person name="Lubec G."/>
            <person name="Yang J.W."/>
            <person name="Zigmond M."/>
        </authorList>
    </citation>
    <scope>PROTEIN SEQUENCE OF 29-39</scope>
    <source>
        <tissue>Brain</tissue>
    </source>
</reference>
<reference key="7">
    <citation type="journal article" date="2013" name="Mol. Cell">
        <title>MsrB1 and MICALs regulate actin assembly and macrophage function via reversible stereoselective methionine oxidation.</title>
        <authorList>
            <person name="Lee B.C."/>
            <person name="Peterfi Z."/>
            <person name="Hoffmann F.W."/>
            <person name="Moore R.E."/>
            <person name="Kaya A."/>
            <person name="Avanesov A."/>
            <person name="Tarrago L."/>
            <person name="Zhou Y."/>
            <person name="Weerapana E."/>
            <person name="Fomenko D.E."/>
            <person name="Hoffmann P.R."/>
            <person name="Gladyshev V.N."/>
        </authorList>
    </citation>
    <scope>OXIDATION AT MET-44 AND MET-47</scope>
    <scope>DEOXIDATION AT MET-44 AND MET-47</scope>
</reference>
<reference key="8">
    <citation type="journal article" date="2023" name="Elife">
        <title>Repair of noise-induced damage to stereocilia F-actin cores is facilitated by XIRP2 and its novel mechanosensor domain.</title>
        <authorList>
            <person name="Wagner E.L."/>
            <person name="Im J.S."/>
            <person name="Sala S."/>
            <person name="Nakahata M.I."/>
            <person name="Imbery T.E."/>
            <person name="Li S."/>
            <person name="Chen D."/>
            <person name="Nimchuk K."/>
            <person name="Noy Y."/>
            <person name="Archer D.W."/>
            <person name="Xu W."/>
            <person name="Hashisaki G."/>
            <person name="Avraham K.B."/>
            <person name="Oakes P.W."/>
            <person name="Shin J.B."/>
        </authorList>
    </citation>
    <scope>FUNCTION</scope>
    <scope>INTERACTION WITH XIRP2</scope>
    <scope>TISSUE SPECIFICITY</scope>
    <scope>INDUCTION BY LOUD NOISE</scope>
    <scope>MUTAGENESIS OF GLY-13</scope>
</reference>
<evidence type="ECO:0000250" key="1">
    <source>
        <dbReference type="UniProtKB" id="P63261"/>
    </source>
</evidence>
<evidence type="ECO:0000250" key="2">
    <source>
        <dbReference type="UniProtKB" id="P68137"/>
    </source>
</evidence>
<evidence type="ECO:0000269" key="3">
    <source>
    </source>
</evidence>
<evidence type="ECO:0000269" key="4">
    <source>
    </source>
</evidence>
<evidence type="ECO:0000269" key="5">
    <source>
    </source>
</evidence>
<evidence type="ECO:0000305" key="6"/>
<dbReference type="EC" id="3.6.4.-" evidence="2"/>
<dbReference type="EMBL" id="X13055">
    <property type="protein sequence ID" value="CAA31455.1"/>
    <property type="molecule type" value="mRNA"/>
</dbReference>
<dbReference type="EMBL" id="AK076081">
    <property type="protein sequence ID" value="BAC36167.1"/>
    <property type="molecule type" value="mRNA"/>
</dbReference>
<dbReference type="EMBL" id="AK087983">
    <property type="protein sequence ID" value="BAC40075.1"/>
    <property type="molecule type" value="mRNA"/>
</dbReference>
<dbReference type="EMBL" id="BC003337">
    <property type="protein sequence ID" value="AAH03337.1"/>
    <property type="molecule type" value="mRNA"/>
</dbReference>
<dbReference type="EMBL" id="BC021796">
    <property type="protein sequence ID" value="AAH21796.1"/>
    <property type="molecule type" value="mRNA"/>
</dbReference>
<dbReference type="EMBL" id="BC023248">
    <property type="protein sequence ID" value="AAH23248.1"/>
    <property type="molecule type" value="mRNA"/>
</dbReference>
<dbReference type="EMBL" id="M21495">
    <property type="protein sequence ID" value="AAA37168.1"/>
    <property type="molecule type" value="mRNA"/>
</dbReference>
<dbReference type="CCDS" id="CCDS25730.1"/>
<dbReference type="PIR" id="A30243">
    <property type="entry name" value="ATMSG"/>
</dbReference>
<dbReference type="RefSeq" id="NP_033739.1">
    <property type="nucleotide sequence ID" value="NM_009609.3"/>
</dbReference>
<dbReference type="SMR" id="P63260"/>
<dbReference type="BioGRID" id="197946">
    <property type="interactions" value="75"/>
</dbReference>
<dbReference type="CORUM" id="P63260"/>
<dbReference type="FunCoup" id="P63260">
    <property type="interactions" value="2430"/>
</dbReference>
<dbReference type="IntAct" id="P63260">
    <property type="interactions" value="26"/>
</dbReference>
<dbReference type="MINT" id="P63260"/>
<dbReference type="STRING" id="10090.ENSMUSP00000071486"/>
<dbReference type="CarbonylDB" id="P63260"/>
<dbReference type="GlyGen" id="P63260">
    <property type="glycosylation" value="7 sites, 1 N-linked glycan (1 site), 1 O-linked glycan (6 sites)"/>
</dbReference>
<dbReference type="iPTMnet" id="P63260"/>
<dbReference type="MetOSite" id="P63260"/>
<dbReference type="PhosphoSitePlus" id="P63260"/>
<dbReference type="SwissPalm" id="P63260"/>
<dbReference type="REPRODUCTION-2DPAGE" id="P63260"/>
<dbReference type="jPOST" id="P63260"/>
<dbReference type="PaxDb" id="10090-ENSMUSP00000071486"/>
<dbReference type="PeptideAtlas" id="P63260"/>
<dbReference type="ProteomicsDB" id="285853"/>
<dbReference type="Pumba" id="P63260"/>
<dbReference type="Antibodypedia" id="32827">
    <property type="antibodies" value="370 antibodies from 35 providers"/>
</dbReference>
<dbReference type="DNASU" id="11465"/>
<dbReference type="Ensembl" id="ENSMUST00000071555.13">
    <property type="protein sequence ID" value="ENSMUSP00000071486.7"/>
    <property type="gene ID" value="ENSMUSG00000062825.16"/>
</dbReference>
<dbReference type="Ensembl" id="ENSMUST00000106215.11">
    <property type="protein sequence ID" value="ENSMUSP00000101822.5"/>
    <property type="gene ID" value="ENSMUSG00000062825.16"/>
</dbReference>
<dbReference type="GeneID" id="11465"/>
<dbReference type="KEGG" id="mmu:11465"/>
<dbReference type="UCSC" id="uc007msi.1">
    <property type="organism name" value="mouse"/>
</dbReference>
<dbReference type="AGR" id="MGI:87906"/>
<dbReference type="CTD" id="71"/>
<dbReference type="MGI" id="MGI:87906">
    <property type="gene designation" value="Actg1"/>
</dbReference>
<dbReference type="VEuPathDB" id="HostDB:ENSMUSG00000062825"/>
<dbReference type="eggNOG" id="KOG0676">
    <property type="taxonomic scope" value="Eukaryota"/>
</dbReference>
<dbReference type="GeneTree" id="ENSGT00950000182960"/>
<dbReference type="HOGENOM" id="CLU_027965_0_2_1"/>
<dbReference type="InParanoid" id="P63260"/>
<dbReference type="OMA" id="PNIMVGM"/>
<dbReference type="OrthoDB" id="9546537at2759"/>
<dbReference type="PhylomeDB" id="P63260"/>
<dbReference type="TreeFam" id="TF354237"/>
<dbReference type="Reactome" id="R-MMU-114608">
    <property type="pathway name" value="Platelet degranulation"/>
</dbReference>
<dbReference type="Reactome" id="R-MMU-190873">
    <property type="pathway name" value="Gap junction degradation"/>
</dbReference>
<dbReference type="Reactome" id="R-MMU-196025">
    <property type="pathway name" value="Formation of annular gap junctions"/>
</dbReference>
<dbReference type="Reactome" id="R-MMU-2029482">
    <property type="pathway name" value="Regulation of actin dynamics for phagocytic cup formation"/>
</dbReference>
<dbReference type="Reactome" id="R-MMU-3928662">
    <property type="pathway name" value="EPHB-mediated forward signaling"/>
</dbReference>
<dbReference type="Reactome" id="R-MMU-418990">
    <property type="pathway name" value="Adherens junctions interactions"/>
</dbReference>
<dbReference type="Reactome" id="R-MMU-437239">
    <property type="pathway name" value="Recycling pathway of L1"/>
</dbReference>
<dbReference type="Reactome" id="R-MMU-4420097">
    <property type="pathway name" value="VEGFA-VEGFR2 Pathway"/>
</dbReference>
<dbReference type="Reactome" id="R-MMU-445095">
    <property type="pathway name" value="Interaction between L1 and Ankyrins"/>
</dbReference>
<dbReference type="Reactome" id="R-MMU-446353">
    <property type="pathway name" value="Cell-extracellular matrix interactions"/>
</dbReference>
<dbReference type="Reactome" id="R-MMU-5626467">
    <property type="pathway name" value="RHO GTPases activate IQGAPs"/>
</dbReference>
<dbReference type="Reactome" id="R-MMU-5663213">
    <property type="pathway name" value="RHO GTPases Activate WASPs and WAVEs"/>
</dbReference>
<dbReference type="Reactome" id="R-MMU-5663220">
    <property type="pathway name" value="RHO GTPases Activate Formins"/>
</dbReference>
<dbReference type="Reactome" id="R-MMU-5674135">
    <property type="pathway name" value="MAP2K and MAPK activation"/>
</dbReference>
<dbReference type="Reactome" id="R-MMU-8856828">
    <property type="pathway name" value="Clathrin-mediated endocytosis"/>
</dbReference>
<dbReference type="Reactome" id="R-MMU-9013418">
    <property type="pathway name" value="RHOBTB2 GTPase cycle"/>
</dbReference>
<dbReference type="Reactome" id="R-MMU-9035034">
    <property type="pathway name" value="RHOF GTPase cycle"/>
</dbReference>
<dbReference type="Reactome" id="R-MMU-9913351">
    <property type="pathway name" value="Formation of the dystrophin-glycoprotein complex (DGC)"/>
</dbReference>
<dbReference type="BioGRID-ORCS" id="11465">
    <property type="hits" value="11 hits in 78 CRISPR screens"/>
</dbReference>
<dbReference type="CD-CODE" id="CE726F99">
    <property type="entry name" value="Postsynaptic density"/>
</dbReference>
<dbReference type="ChiTaRS" id="Actg1">
    <property type="organism name" value="mouse"/>
</dbReference>
<dbReference type="PRO" id="PR:P63260"/>
<dbReference type="Proteomes" id="UP000000589">
    <property type="component" value="Chromosome 11"/>
</dbReference>
<dbReference type="RNAct" id="P63260">
    <property type="molecule type" value="protein"/>
</dbReference>
<dbReference type="Bgee" id="ENSMUSG00000062825">
    <property type="expression patterns" value="Expressed in ectoplacental cone and 75 other cell types or tissues"/>
</dbReference>
<dbReference type="ExpressionAtlas" id="P63260">
    <property type="expression patterns" value="baseline and differential"/>
</dbReference>
<dbReference type="GO" id="GO:0015629">
    <property type="term" value="C:actin cytoskeleton"/>
    <property type="evidence" value="ECO:0000314"/>
    <property type="project" value="MGI"/>
</dbReference>
<dbReference type="GO" id="GO:0043296">
    <property type="term" value="C:apical junction complex"/>
    <property type="evidence" value="ECO:0007669"/>
    <property type="project" value="Ensembl"/>
</dbReference>
<dbReference type="GO" id="GO:0045177">
    <property type="term" value="C:apical part of cell"/>
    <property type="evidence" value="ECO:0000314"/>
    <property type="project" value="MGI"/>
</dbReference>
<dbReference type="GO" id="GO:0120220">
    <property type="term" value="C:basal body patch"/>
    <property type="evidence" value="ECO:0000314"/>
    <property type="project" value="MGI"/>
</dbReference>
<dbReference type="GO" id="GO:0044305">
    <property type="term" value="C:calyx of Held"/>
    <property type="evidence" value="ECO:0000314"/>
    <property type="project" value="SynGO"/>
</dbReference>
<dbReference type="GO" id="GO:0043034">
    <property type="term" value="C:costamere"/>
    <property type="evidence" value="ECO:0000304"/>
    <property type="project" value="MGI"/>
</dbReference>
<dbReference type="GO" id="GO:0005829">
    <property type="term" value="C:cytosol"/>
    <property type="evidence" value="ECO:0000304"/>
    <property type="project" value="Reactome"/>
</dbReference>
<dbReference type="GO" id="GO:0097433">
    <property type="term" value="C:dense body"/>
    <property type="evidence" value="ECO:0000250"/>
    <property type="project" value="AgBase"/>
</dbReference>
<dbReference type="GO" id="GO:0070062">
    <property type="term" value="C:extracellular exosome"/>
    <property type="evidence" value="ECO:0007669"/>
    <property type="project" value="Ensembl"/>
</dbReference>
<dbReference type="GO" id="GO:0031941">
    <property type="term" value="C:filamentous actin"/>
    <property type="evidence" value="ECO:0000314"/>
    <property type="project" value="MGI"/>
</dbReference>
<dbReference type="GO" id="GO:0005925">
    <property type="term" value="C:focal adhesion"/>
    <property type="evidence" value="ECO:0000250"/>
    <property type="project" value="AgBase"/>
</dbReference>
<dbReference type="GO" id="GO:0043209">
    <property type="term" value="C:myelin sheath"/>
    <property type="evidence" value="ECO:0007005"/>
    <property type="project" value="UniProtKB"/>
</dbReference>
<dbReference type="GO" id="GO:0030016">
    <property type="term" value="C:myofibril"/>
    <property type="evidence" value="ECO:0000314"/>
    <property type="project" value="MGI"/>
</dbReference>
<dbReference type="GO" id="GO:0045335">
    <property type="term" value="C:phagocytic vesicle"/>
    <property type="evidence" value="ECO:0000314"/>
    <property type="project" value="MGI"/>
</dbReference>
<dbReference type="GO" id="GO:0005886">
    <property type="term" value="C:plasma membrane"/>
    <property type="evidence" value="ECO:0000250"/>
    <property type="project" value="AgBase"/>
</dbReference>
<dbReference type="GO" id="GO:0098685">
    <property type="term" value="C:Schaffer collateral - CA1 synapse"/>
    <property type="evidence" value="ECO:0000314"/>
    <property type="project" value="SynGO"/>
</dbReference>
<dbReference type="GO" id="GO:0005524">
    <property type="term" value="F:ATP binding"/>
    <property type="evidence" value="ECO:0007669"/>
    <property type="project" value="UniProtKB-KW"/>
</dbReference>
<dbReference type="GO" id="GO:0016787">
    <property type="term" value="F:hydrolase activity"/>
    <property type="evidence" value="ECO:0007669"/>
    <property type="project" value="UniProtKB-KW"/>
</dbReference>
<dbReference type="GO" id="GO:0042802">
    <property type="term" value="F:identical protein binding"/>
    <property type="evidence" value="ECO:0007669"/>
    <property type="project" value="Ensembl"/>
</dbReference>
<dbReference type="GO" id="GO:0005522">
    <property type="term" value="F:profilin binding"/>
    <property type="evidence" value="ECO:0007669"/>
    <property type="project" value="Ensembl"/>
</dbReference>
<dbReference type="GO" id="GO:0005200">
    <property type="term" value="F:structural constituent of cytoskeleton"/>
    <property type="evidence" value="ECO:0000314"/>
    <property type="project" value="MGI"/>
</dbReference>
<dbReference type="GO" id="GO:0031625">
    <property type="term" value="F:ubiquitin protein ligase binding"/>
    <property type="evidence" value="ECO:0007669"/>
    <property type="project" value="Ensembl"/>
</dbReference>
<dbReference type="GO" id="GO:0001525">
    <property type="term" value="P:angiogenesis"/>
    <property type="evidence" value="ECO:0007669"/>
    <property type="project" value="Ensembl"/>
</dbReference>
<dbReference type="GO" id="GO:0071346">
    <property type="term" value="P:cellular response to type II interferon"/>
    <property type="evidence" value="ECO:0000314"/>
    <property type="project" value="MGI"/>
</dbReference>
<dbReference type="GO" id="GO:0001738">
    <property type="term" value="P:morphogenesis of a polarized epithelium"/>
    <property type="evidence" value="ECO:0007669"/>
    <property type="project" value="Ensembl"/>
</dbReference>
<dbReference type="GO" id="GO:0030335">
    <property type="term" value="P:positive regulation of cell migration"/>
    <property type="evidence" value="ECO:0007669"/>
    <property type="project" value="Ensembl"/>
</dbReference>
<dbReference type="GO" id="GO:0010628">
    <property type="term" value="P:positive regulation of gene expression"/>
    <property type="evidence" value="ECO:0007669"/>
    <property type="project" value="Ensembl"/>
</dbReference>
<dbReference type="GO" id="GO:0090303">
    <property type="term" value="P:positive regulation of wound healing"/>
    <property type="evidence" value="ECO:0007669"/>
    <property type="project" value="Ensembl"/>
</dbReference>
<dbReference type="GO" id="GO:1902396">
    <property type="term" value="P:protein localization to bicellular tight junction"/>
    <property type="evidence" value="ECO:0007669"/>
    <property type="project" value="Ensembl"/>
</dbReference>
<dbReference type="GO" id="GO:0051893">
    <property type="term" value="P:regulation of focal adhesion assembly"/>
    <property type="evidence" value="ECO:0007669"/>
    <property type="project" value="Ensembl"/>
</dbReference>
<dbReference type="GO" id="GO:0051492">
    <property type="term" value="P:regulation of stress fiber assembly"/>
    <property type="evidence" value="ECO:0007669"/>
    <property type="project" value="Ensembl"/>
</dbReference>
<dbReference type="GO" id="GO:1900242">
    <property type="term" value="P:regulation of synaptic vesicle endocytosis"/>
    <property type="evidence" value="ECO:0000314"/>
    <property type="project" value="SynGO"/>
</dbReference>
<dbReference type="GO" id="GO:0150111">
    <property type="term" value="P:regulation of transepithelial transport"/>
    <property type="evidence" value="ECO:0007669"/>
    <property type="project" value="Ensembl"/>
</dbReference>
<dbReference type="GO" id="GO:0045214">
    <property type="term" value="P:sarcomere organization"/>
    <property type="evidence" value="ECO:0000314"/>
    <property type="project" value="MGI"/>
</dbReference>
<dbReference type="GO" id="GO:0120192">
    <property type="term" value="P:tight junction assembly"/>
    <property type="evidence" value="ECO:0007669"/>
    <property type="project" value="Ensembl"/>
</dbReference>
<dbReference type="CDD" id="cd10224">
    <property type="entry name" value="ASKHA_NBD_actin"/>
    <property type="match status" value="1"/>
</dbReference>
<dbReference type="FunFam" id="3.30.420.40:FF:000131">
    <property type="entry name" value="Actin, alpha skeletal muscle"/>
    <property type="match status" value="1"/>
</dbReference>
<dbReference type="FunFam" id="3.30.420.40:FF:000291">
    <property type="entry name" value="Actin, alpha skeletal muscle"/>
    <property type="match status" value="1"/>
</dbReference>
<dbReference type="FunFam" id="3.90.640.10:FF:000047">
    <property type="entry name" value="Actin, alpha skeletal muscle"/>
    <property type="match status" value="1"/>
</dbReference>
<dbReference type="FunFam" id="3.30.420.40:FF:000058">
    <property type="entry name" value="Putative actin-related protein 5"/>
    <property type="match status" value="1"/>
</dbReference>
<dbReference type="Gene3D" id="3.30.420.40">
    <property type="match status" value="2"/>
</dbReference>
<dbReference type="Gene3D" id="3.90.640.10">
    <property type="entry name" value="Actin, Chain A, domain 4"/>
    <property type="match status" value="1"/>
</dbReference>
<dbReference type="InterPro" id="IPR004000">
    <property type="entry name" value="Actin"/>
</dbReference>
<dbReference type="InterPro" id="IPR020902">
    <property type="entry name" value="Actin/actin-like_CS"/>
</dbReference>
<dbReference type="InterPro" id="IPR004001">
    <property type="entry name" value="Actin_CS"/>
</dbReference>
<dbReference type="InterPro" id="IPR043129">
    <property type="entry name" value="ATPase_NBD"/>
</dbReference>
<dbReference type="PANTHER" id="PTHR11937">
    <property type="entry name" value="ACTIN"/>
    <property type="match status" value="1"/>
</dbReference>
<dbReference type="Pfam" id="PF00022">
    <property type="entry name" value="Actin"/>
    <property type="match status" value="1"/>
</dbReference>
<dbReference type="PRINTS" id="PR00190">
    <property type="entry name" value="ACTIN"/>
</dbReference>
<dbReference type="SMART" id="SM00268">
    <property type="entry name" value="ACTIN"/>
    <property type="match status" value="1"/>
</dbReference>
<dbReference type="SUPFAM" id="SSF53067">
    <property type="entry name" value="Actin-like ATPase domain"/>
    <property type="match status" value="2"/>
</dbReference>
<dbReference type="PROSITE" id="PS00406">
    <property type="entry name" value="ACTINS_1"/>
    <property type="match status" value="1"/>
</dbReference>
<dbReference type="PROSITE" id="PS00432">
    <property type="entry name" value="ACTINS_2"/>
    <property type="match status" value="1"/>
</dbReference>
<dbReference type="PROSITE" id="PS01132">
    <property type="entry name" value="ACTINS_ACT_LIKE"/>
    <property type="match status" value="1"/>
</dbReference>